<gene>
    <name type="primary">REV1</name>
    <name type="ordered locus">At5g44750</name>
    <name type="ORF">K23L20.9</name>
    <name type="ORF">T19K24.14</name>
</gene>
<name>REV1_ARATH</name>
<proteinExistence type="evidence at transcript level"/>
<keyword id="KW-0025">Alternative splicing</keyword>
<keyword id="KW-0227">DNA damage</keyword>
<keyword id="KW-0234">DNA repair</keyword>
<keyword id="KW-0237">DNA synthesis</keyword>
<keyword id="KW-0238">DNA-binding</keyword>
<keyword id="KW-0460">Magnesium</keyword>
<keyword id="KW-0464">Manganese</keyword>
<keyword id="KW-0479">Metal-binding</keyword>
<keyword id="KW-0548">Nucleotidyltransferase</keyword>
<keyword id="KW-0539">Nucleus</keyword>
<keyword id="KW-1185">Reference proteome</keyword>
<keyword id="KW-0808">Transferase</keyword>
<comment type="function">
    <text evidence="7 8 9 10">Deoxycytidyl transferase involved in DNA repair and translesion synthesis (TLS). Transfers a dCMP residue from dCTP to the 3'-end of a DNA primer in a template-dependent reaction. Also mediates the insertion of dTMP or dGMP when the opposite base is G, and, with a low efficiency, dGMP insertions opposite G, T, and C, dAMP insertions opposite G, A, and T, and dTMP insertion opposite A. May assist in the first step in the bypass of abasic lesions by the insertion of a nucleotide opposite the lesion. Required for normal induction of mutations by physical and chemical agents (e.g. UV and gamma ray), mostly via G to T transversions, and of spontaneous mutations in somatic cells. Confers resistance to ultraviolet-B (UV-B) and various DNA cross-linkers (e.g. mitomycin C MMC and cisplatin). Promotes stem growth.</text>
</comment>
<comment type="cofactor">
    <cofactor evidence="7">
        <name>Mn(2+)</name>
        <dbReference type="ChEBI" id="CHEBI:29035"/>
    </cofactor>
    <cofactor evidence="7">
        <name>Mg(2+)</name>
        <dbReference type="ChEBI" id="CHEBI:18420"/>
    </cofactor>
    <text evidence="7">Mn(2+) ions. Can also use Mg(2+) ions with a lower efficiency.</text>
</comment>
<comment type="subunit">
    <text evidence="1">Monomer.</text>
</comment>
<comment type="subcellular location">
    <subcellularLocation>
        <location evidence="1">Nucleus</location>
    </subcellularLocation>
</comment>
<comment type="alternative products">
    <event type="alternative splicing"/>
    <isoform>
        <id>A3EWL3-1</id>
        <name>1</name>
        <name>AtREV1-1105</name>
        <sequence type="displayed"/>
    </isoform>
    <isoform>
        <id>A3EWL3-2</id>
        <name>2</name>
        <sequence type="described" ref="VSP_042707"/>
    </isoform>
    <isoform>
        <id>A3EWL3-3</id>
        <name>3</name>
        <name>AtREV1-431</name>
        <sequence type="described" ref="VSP_042704"/>
    </isoform>
    <isoform>
        <id>A3EWL3-4</id>
        <name>4</name>
        <name>AtREV1-630</name>
        <sequence type="described" ref="VSP_042706"/>
    </isoform>
    <isoform>
        <id>A3EWL3-5</id>
        <name>5</name>
        <name>AtREV1-651</name>
        <sequence type="described" ref="VSP_042708"/>
    </isoform>
    <isoform>
        <id>A3EWL3-6</id>
        <name>6</name>
        <name>AtREV1-436</name>
        <sequence type="described" ref="VSP_042705"/>
    </isoform>
    <isoform>
        <id>A3EWL3-7</id>
        <name>7</name>
        <name>AtREV1-444</name>
        <sequence type="described" ref="VSP_042703 VSP_042708"/>
    </isoform>
</comment>
<comment type="domain">
    <text evidence="1">The C-terminal domain is necessary for protein interactions.</text>
</comment>
<comment type="disruption phenotype">
    <text evidence="6 8 9 10">Reduced UV light- and gamma ray-induced mutation frequency. Slightly sensitive to ultraviolet-B (UV-B) and DNA cross-linkers (e.g. mitomycin C MMC and cisplatin). Lower germination rate.</text>
</comment>
<comment type="similarity">
    <text evidence="13">Belongs to the DNA polymerase type-Y family.</text>
</comment>
<comment type="sequence caution" evidence="13">
    <conflict type="erroneous gene model prediction">
        <sequence resource="EMBL-CDS" id="AAC79145"/>
    </conflict>
</comment>
<comment type="sequence caution" evidence="13">
    <conflict type="erroneous gene model prediction">
        <sequence resource="EMBL-CDS" id="BAB08828"/>
    </conflict>
</comment>
<accession>A3EWL3</accession>
<accession>A3EWL4</accession>
<accession>A3EWL5</accession>
<accession>A3EWL6</accession>
<accession>A3EWL7</accession>
<accession>A3EWL8</accession>
<accession>O48585</accession>
<accession>Q5FBB9</accession>
<accession>Q8RXL1</accession>
<reference key="1">
    <citation type="journal article" date="2005" name="Plant Physiol.">
        <title>Roles of Arabidopsis AtREV1 and AtREV7 in translesion synthesis.</title>
        <authorList>
            <person name="Takahashi S."/>
            <person name="Sakamoto A."/>
            <person name="Sato S."/>
            <person name="Kato T."/>
            <person name="Tabata S."/>
            <person name="Tanaka A."/>
        </authorList>
    </citation>
    <scope>NUCLEOTIDE SEQUENCE [MRNA] (ISOFORM 2)</scope>
    <scope>DISRUPTION PHENOTYPE</scope>
</reference>
<reference key="2">
    <citation type="journal article" date="2009" name="Plant Sci.">
        <title>Alternative splicing of two translesion synthesis DNA polymerases from Arabidopsis thaliana.</title>
        <authorList>
            <person name="Santiago M.J."/>
            <person name="Alejandre-Duran E."/>
            <person name="Ruiz-Rubio M."/>
        </authorList>
    </citation>
    <scope>NUCLEOTIDE SEQUENCE [MRNA] (ISOFORMS 1; 3; 4; 5; 6 AND 7)</scope>
    <source>
        <strain>cv. Columbia</strain>
    </source>
</reference>
<reference key="3">
    <citation type="journal article" date="1998" name="DNA Res.">
        <title>Structural analysis of Arabidopsis thaliana chromosome 5. VIII. Sequence features of the regions of 1,081,958 bp covered by seventeen physically assigned P1 and TAC clones.</title>
        <authorList>
            <person name="Asamizu E."/>
            <person name="Sato S."/>
            <person name="Kaneko T."/>
            <person name="Nakamura Y."/>
            <person name="Kotani H."/>
            <person name="Miyajima N."/>
            <person name="Tabata S."/>
        </authorList>
    </citation>
    <scope>NUCLEOTIDE SEQUENCE [LARGE SCALE GENOMIC DNA]</scope>
    <source>
        <strain>cv. Columbia</strain>
    </source>
</reference>
<reference key="4">
    <citation type="journal article" date="2000" name="Nature">
        <title>Sequence and analysis of chromosome 5 of the plant Arabidopsis thaliana.</title>
        <authorList>
            <person name="Tabata S."/>
            <person name="Kaneko T."/>
            <person name="Nakamura Y."/>
            <person name="Kotani H."/>
            <person name="Kato T."/>
            <person name="Asamizu E."/>
            <person name="Miyajima N."/>
            <person name="Sasamoto S."/>
            <person name="Kimura T."/>
            <person name="Hosouchi T."/>
            <person name="Kawashima K."/>
            <person name="Kohara M."/>
            <person name="Matsumoto M."/>
            <person name="Matsuno A."/>
            <person name="Muraki A."/>
            <person name="Nakayama S."/>
            <person name="Nakazaki N."/>
            <person name="Naruo K."/>
            <person name="Okumura S."/>
            <person name="Shinpo S."/>
            <person name="Takeuchi C."/>
            <person name="Wada T."/>
            <person name="Watanabe A."/>
            <person name="Yamada M."/>
            <person name="Yasuda M."/>
            <person name="Sato S."/>
            <person name="de la Bastide M."/>
            <person name="Huang E."/>
            <person name="Spiegel L."/>
            <person name="Gnoj L."/>
            <person name="O'Shaughnessy A."/>
            <person name="Preston R."/>
            <person name="Habermann K."/>
            <person name="Murray J."/>
            <person name="Johnson D."/>
            <person name="Rohlfing T."/>
            <person name="Nelson J."/>
            <person name="Stoneking T."/>
            <person name="Pepin K."/>
            <person name="Spieth J."/>
            <person name="Sekhon M."/>
            <person name="Armstrong J."/>
            <person name="Becker M."/>
            <person name="Belter E."/>
            <person name="Cordum H."/>
            <person name="Cordes M."/>
            <person name="Courtney L."/>
            <person name="Courtney W."/>
            <person name="Dante M."/>
            <person name="Du H."/>
            <person name="Edwards J."/>
            <person name="Fryman J."/>
            <person name="Haakensen B."/>
            <person name="Lamar E."/>
            <person name="Latreille P."/>
            <person name="Leonard S."/>
            <person name="Meyer R."/>
            <person name="Mulvaney E."/>
            <person name="Ozersky P."/>
            <person name="Riley A."/>
            <person name="Strowmatt C."/>
            <person name="Wagner-McPherson C."/>
            <person name="Wollam A."/>
            <person name="Yoakum M."/>
            <person name="Bell M."/>
            <person name="Dedhia N."/>
            <person name="Parnell L."/>
            <person name="Shah R."/>
            <person name="Rodriguez M."/>
            <person name="Hoon See L."/>
            <person name="Vil D."/>
            <person name="Baker J."/>
            <person name="Kirchoff K."/>
            <person name="Toth K."/>
            <person name="King L."/>
            <person name="Bahret A."/>
            <person name="Miller B."/>
            <person name="Marra M.A."/>
            <person name="Martienssen R."/>
            <person name="McCombie W.R."/>
            <person name="Wilson R.K."/>
            <person name="Murphy G."/>
            <person name="Bancroft I."/>
            <person name="Volckaert G."/>
            <person name="Wambutt R."/>
            <person name="Duesterhoeft A."/>
            <person name="Stiekema W."/>
            <person name="Pohl T."/>
            <person name="Entian K.-D."/>
            <person name="Terryn N."/>
            <person name="Hartley N."/>
            <person name="Bent E."/>
            <person name="Johnson S."/>
            <person name="Langham S.-A."/>
            <person name="McCullagh B."/>
            <person name="Robben J."/>
            <person name="Grymonprez B."/>
            <person name="Zimmermann W."/>
            <person name="Ramsperger U."/>
            <person name="Wedler H."/>
            <person name="Balke K."/>
            <person name="Wedler E."/>
            <person name="Peters S."/>
            <person name="van Staveren M."/>
            <person name="Dirkse W."/>
            <person name="Mooijman P."/>
            <person name="Klein Lankhorst R."/>
            <person name="Weitzenegger T."/>
            <person name="Bothe G."/>
            <person name="Rose M."/>
            <person name="Hauf J."/>
            <person name="Berneiser S."/>
            <person name="Hempel S."/>
            <person name="Feldpausch M."/>
            <person name="Lamberth S."/>
            <person name="Villarroel R."/>
            <person name="Gielen J."/>
            <person name="Ardiles W."/>
            <person name="Bents O."/>
            <person name="Lemcke K."/>
            <person name="Kolesov G."/>
            <person name="Mayer K.F.X."/>
            <person name="Rudd S."/>
            <person name="Schoof H."/>
            <person name="Schueller C."/>
            <person name="Zaccaria P."/>
            <person name="Mewes H.-W."/>
            <person name="Bevan M."/>
            <person name="Fransz P.F."/>
        </authorList>
    </citation>
    <scope>NUCLEOTIDE SEQUENCE [LARGE SCALE GENOMIC DNA]</scope>
    <source>
        <strain>cv. Columbia</strain>
    </source>
</reference>
<reference key="5">
    <citation type="journal article" date="2017" name="Plant J.">
        <title>Araport11: a complete reannotation of the Arabidopsis thaliana reference genome.</title>
        <authorList>
            <person name="Cheng C.Y."/>
            <person name="Krishnakumar V."/>
            <person name="Chan A.P."/>
            <person name="Thibaud-Nissen F."/>
            <person name="Schobel S."/>
            <person name="Town C.D."/>
        </authorList>
    </citation>
    <scope>GENOME REANNOTATION</scope>
    <source>
        <strain>cv. Columbia</strain>
    </source>
</reference>
<reference key="6">
    <citation type="journal article" date="2003" name="Science">
        <title>Empirical analysis of transcriptional activity in the Arabidopsis genome.</title>
        <authorList>
            <person name="Yamada K."/>
            <person name="Lim J."/>
            <person name="Dale J.M."/>
            <person name="Chen H."/>
            <person name="Shinn P."/>
            <person name="Palm C.J."/>
            <person name="Southwick A.M."/>
            <person name="Wu H.C."/>
            <person name="Kim C.J."/>
            <person name="Nguyen M."/>
            <person name="Pham P.K."/>
            <person name="Cheuk R.F."/>
            <person name="Karlin-Newmann G."/>
            <person name="Liu S.X."/>
            <person name="Lam B."/>
            <person name="Sakano H."/>
            <person name="Wu T."/>
            <person name="Yu G."/>
            <person name="Miranda M."/>
            <person name="Quach H.L."/>
            <person name="Tripp M."/>
            <person name="Chang C.H."/>
            <person name="Lee J.M."/>
            <person name="Toriumi M.J."/>
            <person name="Chan M.M."/>
            <person name="Tang C.C."/>
            <person name="Onodera C.S."/>
            <person name="Deng J.M."/>
            <person name="Akiyama K."/>
            <person name="Ansari Y."/>
            <person name="Arakawa T."/>
            <person name="Banh J."/>
            <person name="Banno F."/>
            <person name="Bowser L."/>
            <person name="Brooks S.Y."/>
            <person name="Carninci P."/>
            <person name="Chao Q."/>
            <person name="Choy N."/>
            <person name="Enju A."/>
            <person name="Goldsmith A.D."/>
            <person name="Gurjal M."/>
            <person name="Hansen N.F."/>
            <person name="Hayashizaki Y."/>
            <person name="Johnson-Hopson C."/>
            <person name="Hsuan V.W."/>
            <person name="Iida K."/>
            <person name="Karnes M."/>
            <person name="Khan S."/>
            <person name="Koesema E."/>
            <person name="Ishida J."/>
            <person name="Jiang P.X."/>
            <person name="Jones T."/>
            <person name="Kawai J."/>
            <person name="Kamiya A."/>
            <person name="Meyers C."/>
            <person name="Nakajima M."/>
            <person name="Narusaka M."/>
            <person name="Seki M."/>
            <person name="Sakurai T."/>
            <person name="Satou M."/>
            <person name="Tamse R."/>
            <person name="Vaysberg M."/>
            <person name="Wallender E.K."/>
            <person name="Wong C."/>
            <person name="Yamamura Y."/>
            <person name="Yuan S."/>
            <person name="Shinozaki K."/>
            <person name="Davis R.W."/>
            <person name="Theologis A."/>
            <person name="Ecker J.R."/>
        </authorList>
    </citation>
    <scope>NUCLEOTIDE SEQUENCE [LARGE SCALE MRNA] OF 924-1105 (ISOFORM 1)</scope>
    <source>
        <strain>cv. Columbia</strain>
    </source>
</reference>
<reference key="7">
    <citation type="journal article" date="2007" name="Plant Physiol.">
        <title>AtREV1, a Y-family DNA polymerase in Arabidopsis, has deoxynucleotidyl transferase activity in vitro.</title>
        <authorList>
            <person name="Takahashi S."/>
            <person name="Sakamoto A.N."/>
            <person name="Tanaka A."/>
            <person name="Shimizu K."/>
        </authorList>
    </citation>
    <scope>FUNCTION</scope>
    <scope>COFACTOR</scope>
</reference>
<reference key="8">
    <citation type="journal article" date="2008" name="J. Plant Physiol.">
        <title>Two translesion synthesis DNA polymerase genes, AtPOLH and AtREV1, are involved in development and UV light resistance in Arabidopsis.</title>
        <authorList>
            <person name="Jesus Santiago M."/>
            <person name="Alejandre-Duran E."/>
            <person name="Munoz-Serrano A."/>
            <person name="Ruiz-Rubio M."/>
        </authorList>
    </citation>
    <scope>FUNCTION</scope>
    <scope>DISRUPTION PHENOTYPE</scope>
    <source>
        <strain>cv. Columbia</strain>
    </source>
</reference>
<reference key="9">
    <citation type="journal article" date="2011" name="Plant Physiol.">
        <title>Role of AtPolzeta, AtRev1, and AtPoleta in UV light-induced mutagenesis in Arabidopsis.</title>
        <authorList>
            <person name="Nakagawa M."/>
            <person name="Takahashi S."/>
            <person name="Tanaka A."/>
            <person name="Narumi I."/>
            <person name="Sakamoto A.N."/>
        </authorList>
    </citation>
    <scope>FUNCTION</scope>
    <scope>DISRUPTION PHENOTYPE</scope>
</reference>
<reference key="10">
    <citation type="journal article" date="2011" name="Plant Signal. Behav.">
        <title>Role of AtPolzeta, AtRev1 and AtPoleta in gamma ray-induced mutagenesis.</title>
        <authorList>
            <person name="Nakagawa M."/>
            <person name="Takahashi S."/>
            <person name="Narumi I."/>
            <person name="Sakamoto A.N."/>
        </authorList>
    </citation>
    <scope>FUNCTION</scope>
    <scope>DISRUPTION PHENOTYPE</scope>
</reference>
<feature type="chain" id="PRO_0000416595" description="DNA repair protein REV1">
    <location>
        <begin position="1"/>
        <end position="1105"/>
    </location>
</feature>
<feature type="domain" description="BRCT" evidence="3">
    <location>
        <begin position="83"/>
        <end position="174"/>
    </location>
</feature>
<feature type="domain" description="UmuC" evidence="4">
    <location>
        <begin position="375"/>
        <end position="556"/>
    </location>
</feature>
<feature type="region of interest" description="Disordered" evidence="5">
    <location>
        <begin position="1"/>
        <end position="50"/>
    </location>
</feature>
<feature type="region of interest" description="Disordered" evidence="5">
    <location>
        <begin position="198"/>
        <end position="263"/>
    </location>
</feature>
<feature type="region of interest" description="Disordered" evidence="5">
    <location>
        <begin position="276"/>
        <end position="319"/>
    </location>
</feature>
<feature type="region of interest" description="Interaction with target DNA" evidence="1">
    <location>
        <begin position="330"/>
        <end position="340"/>
    </location>
</feature>
<feature type="region of interest" description="Interaction with target DNA" evidence="1">
    <location>
        <begin position="556"/>
        <end position="559"/>
    </location>
</feature>
<feature type="region of interest" description="Interaction with target DNA" evidence="1">
    <location>
        <begin position="612"/>
        <end position="620"/>
    </location>
</feature>
<feature type="region of interest" description="Disordered" evidence="5">
    <location>
        <begin position="775"/>
        <end position="803"/>
    </location>
</feature>
<feature type="region of interest" description="Disordered" evidence="5">
    <location>
        <begin position="934"/>
        <end position="959"/>
    </location>
</feature>
<feature type="region of interest" description="Protein interaction domain; mediates interaction with DNA polymerase zeta" evidence="1">
    <location>
        <begin position="1021"/>
        <end position="1103"/>
    </location>
</feature>
<feature type="short sequence motif" description="Nuclear localization signal" evidence="2">
    <location>
        <begin position="953"/>
        <end position="961"/>
    </location>
</feature>
<feature type="compositionally biased region" description="Polar residues" evidence="5">
    <location>
        <begin position="198"/>
        <end position="209"/>
    </location>
</feature>
<feature type="compositionally biased region" description="Polar residues" evidence="5">
    <location>
        <begin position="242"/>
        <end position="254"/>
    </location>
</feature>
<feature type="compositionally biased region" description="Polar residues" evidence="5">
    <location>
        <begin position="279"/>
        <end position="293"/>
    </location>
</feature>
<feature type="compositionally biased region" description="Polar residues" evidence="5">
    <location>
        <begin position="794"/>
        <end position="803"/>
    </location>
</feature>
<feature type="compositionally biased region" description="Basic and acidic residues" evidence="5">
    <location>
        <begin position="947"/>
        <end position="959"/>
    </location>
</feature>
<feature type="active site" evidence="4">
    <location>
        <position position="477"/>
    </location>
</feature>
<feature type="binding site" evidence="1">
    <location>
        <position position="335"/>
    </location>
    <ligand>
        <name>dCTP</name>
        <dbReference type="ChEBI" id="CHEBI:61481"/>
    </ligand>
</feature>
<feature type="binding site" evidence="1">
    <location>
        <begin position="379"/>
        <end position="383"/>
    </location>
    <ligand>
        <name>dCTP</name>
        <dbReference type="ChEBI" id="CHEBI:61481"/>
    </ligand>
</feature>
<feature type="binding site" evidence="1">
    <location>
        <position position="379"/>
    </location>
    <ligand>
        <name>Mn(2+)</name>
        <dbReference type="ChEBI" id="CHEBI:29035"/>
        <label>1</label>
    </ligand>
</feature>
<feature type="binding site" evidence="1">
    <location>
        <position position="379"/>
    </location>
    <ligand>
        <name>Mn(2+)</name>
        <dbReference type="ChEBI" id="CHEBI:29035"/>
        <label>2</label>
    </ligand>
</feature>
<feature type="binding site" evidence="1">
    <location>
        <begin position="416"/>
        <end position="422"/>
    </location>
    <ligand>
        <name>dCTP</name>
        <dbReference type="ChEBI" id="CHEBI:61481"/>
    </ligand>
</feature>
<feature type="binding site" evidence="1">
    <location>
        <position position="476"/>
    </location>
    <ligand>
        <name>dCTP</name>
        <dbReference type="ChEBI" id="CHEBI:61481"/>
    </ligand>
</feature>
<feature type="binding site" evidence="1">
    <location>
        <position position="476"/>
    </location>
    <ligand>
        <name>Mn(2+)</name>
        <dbReference type="ChEBI" id="CHEBI:29035"/>
        <label>1</label>
    </ligand>
</feature>
<feature type="binding site" evidence="1">
    <location>
        <position position="477"/>
    </location>
    <ligand>
        <name>Mn(2+)</name>
        <dbReference type="ChEBI" id="CHEBI:29035"/>
        <label>1</label>
    </ligand>
</feature>
<feature type="site" description="Substrate discrimination" evidence="4">
    <location>
        <position position="384"/>
    </location>
</feature>
<feature type="site" description="Interaction with target DNA" evidence="1">
    <location>
        <position position="676"/>
    </location>
</feature>
<feature type="splice variant" id="VSP_042703" description="In isoform 7." evidence="12">
    <location>
        <begin position="333"/>
        <end position="539"/>
    </location>
</feature>
<feature type="splice variant" id="VSP_042704" description="In isoform 3." evidence="12">
    <original>VKAGMFVRHAKDLCPQLVIVPYNFEAYEEVADQFYDILHRHCRKVQALSCDEAFLDVSDLSDVETEVLASTIRNEILETTGCSASAGIGGTMLMARLATRVAKPAGQLYISAEKVEEFLDQLPVGTLPGVGSVLKEKLVKQNIQTCGQLRLISKDSLQKDFGVKTGEMLWSYSRGLDLRSVTAVQESKSIGAEVNWGVRFRDQQDVFILVQHFLQCLCKEVSLRLQGCEMIGRTFTLKIKKRKKDAEEPTKYMGCGDCDNLSRSITVPAATDDIEVLQRISKKLFGSFCLDVKEVRGVGLQVSKLDSADPSNKGSRTLKSWLSSAPAVVQIEQDDNVFAAKVRENSDCNRPVTGGVSRLRESNSEESSIQSGDTNSSLPPMCYLDMEVLENLPPELLSELDGTYGGKLFELIEKKRGKRRINCNSPHVSLDGTAASIKELKSLSVKIHGLSTSGEKEYKEPYVPHPSIARTSNQHTIEMTDLLPSSLSQVDVSVLQELPEELRADVLGAFPSHRRQQSSSDVPKETCKKQDEEPIDLKGTENEIGLSFSSLWFGNPPLWTEKFKVSGNCTMEKLSAIYFKVAQSRPMLSLVLQHAISEMSSFPDAASASDLDKAIYDVCELLKQYINLKVGGDIEEIYLCFRLLKRLAARSQLFLQVYEILSPFIQASISEHYGGSLSIP</original>
    <variation>LSYTKE</variation>
    <location>
        <begin position="426"/>
        <end position="1105"/>
    </location>
</feature>
<feature type="splice variant" id="VSP_042705" description="In isoform 6." evidence="12">
    <original>MFVRHAKDLCPQLVIVPYNFEAYEEVADQFYDILHRHCRKVQALSCDEAFLDVSDLSDVETEVLASTIRNEILETTGCSASAGIGGTMLMARLATRVAKPAGQLYISAEKVEEFLDQLPVGTLPGVGSVLKEKLVKQNIQTCGQLRLISKDSLQKDFGVKTGEMLWSYSRGLDLRSVTAVQESKSIGAEVNWGVRFRDQQDVFILVQHFLQCLCKEVSLRLQGCEMIGRTFTLKIKKRKKDAEEPTKYMGCGDCDNLSRSITVPAATDDIEVLQRISKKLFGSFCLDVKEVRGVGLQVSKLDSADPSNKGSRTLKSWLSSAPAVVQIEQDDNVFAAKVRENSDCNRPVTGGVSRLRESNSEESSIQSGDTNSSLPPMCYLDMEVLENLPPELLSELDGTYGGKLFELIEKKRGKRRINCNSPHVSLDGTAASIKELKSLSVKIHGLSTSGEKEYKEPYVPHPSIARTSNQHTIEMTDLLPSSLSQVDVSVLQELPEELRADVLGAFPSHRRQQSSSDVPKETCKKQDEEPIDLKGTENEIGLSFSSLWFGNPPLWTEKFKVSGNCTMEKLSAIYFKVAQSRPMLSLVLQHAISEMSSFPDAASASDLDKAIYDVCELLKQYINLKVGGDIEEIYLCFRLLKRLAARSQLFLQVYEILSPFIQASISEHYGGSLSIP</original>
    <variation>IAEKSRR</variation>
    <location>
        <begin position="430"/>
        <end position="1105"/>
    </location>
</feature>
<feature type="splice variant" id="VSP_042706" description="In isoform 4." evidence="12">
    <original>KSIGAEVNWGVRFRDQQDVFILVQHFLQCLCKEVSLRLQGCEMIGRTFTLKIKKRKKDAEEPTKYMGCGDCDNLSRSITVPAATDDIEVLQRISKKLFGSFCLDVKEVRGVGLQVSKLDSADPSNKGSRTLKSWLSSAPAVVQIEQDDNVFAAKVRENSDCNRPVTGGVSRLRESNSEESSIQSGDTNSSLPPMCYLDMEVLENLPPELLSELDGTYGGKLFELIEKKRGKRRINCNSPHVSLDGTAASIKELKSLSVKIHGLSTSGEKEYKEPYVPHPSIARTSNQHTIEMTDLLPSSLSQVDVSVLQELPEELRADVLGAFPSHRRQQSSSDVPKETCKKQDEEPIDLKGTENEIGLSFSSLWFGNPPLWTEKFKVSGNCTMEKLSAIYFKVAQSRPMLSLVLQHAISEMSSFPDAASASDLDKAIYDVCELLKQYINLKVGGDIEEIYLCFRLLKRLAARSQLFLQVYEILSPFIQASISEHYGGSLSIP</original>
    <variation>STLPPMPMQRSFFASARM</variation>
    <location>
        <begin position="613"/>
        <end position="1105"/>
    </location>
</feature>
<feature type="splice variant" id="VSP_042707" description="In isoform 2." evidence="11">
    <location>
        <begin position="631"/>
        <end position="634"/>
    </location>
</feature>
<feature type="splice variant" id="VSP_042708" description="In isoform 5 and isoform 7." evidence="12">
    <original>QHFLQCLCKEVSLRLQGCEMIGRTFTLKIKKRKKDAEEPTKYMGCGDCDNLSRSITVPAATDDIEVLQRISKKLFGSFCLDVKEVRGVGLQVSKLDSADPSNKGSRTLKSWLSSAPAVVQIEQDDNVFAAKVRENSDCNRPVTGGVSRLRESNSEESSIQSGDTNSSLPPMCYLDMEVLENLPPELLSELDGTYGGKLFELIEKKRGKRRINCNSPHVSLDGTAASIKELKSLSVKIHGLSTSGEKEYKEPYVPHPSIARTSNQHTIEMTDLLPSSLSQVDVSVLQELPEELRADVLGAFPSHRRQQSSSDVPKETCKKQDEEPIDLKGTENEIGLSFSSLWFGNPPLWTEKFKVSGNCTMEKLSAIYFKVAQSRPMLSLVLQHAISEMSSFPDAASASDLDKAIYDVCELLKQYINLKVGGDIEEIYLCFRLLKRLAARSQLFLQVYEILSPFIQASISEHYGGSLSIP</original>
    <variation>NNVLLFFPKHYSFDVS</variation>
    <location>
        <begin position="636"/>
        <end position="1105"/>
    </location>
</feature>
<protein>
    <recommendedName>
        <fullName>DNA repair protein REV1</fullName>
        <shortName>AtREV1</shortName>
        <ecNumber>2.7.7.-</ecNumber>
    </recommendedName>
    <alternativeName>
        <fullName>Rev1-like terminal deoxycytidyl transferase</fullName>
    </alternativeName>
</protein>
<evidence type="ECO:0000250" key="1"/>
<evidence type="ECO:0000255" key="2"/>
<evidence type="ECO:0000255" key="3">
    <source>
        <dbReference type="PROSITE-ProRule" id="PRU00033"/>
    </source>
</evidence>
<evidence type="ECO:0000255" key="4">
    <source>
        <dbReference type="PROSITE-ProRule" id="PRU00216"/>
    </source>
</evidence>
<evidence type="ECO:0000256" key="5">
    <source>
        <dbReference type="SAM" id="MobiDB-lite"/>
    </source>
</evidence>
<evidence type="ECO:0000269" key="6">
    <source>
    </source>
</evidence>
<evidence type="ECO:0000269" key="7">
    <source>
    </source>
</evidence>
<evidence type="ECO:0000269" key="8">
    <source>
    </source>
</evidence>
<evidence type="ECO:0000269" key="9">
    <source>
    </source>
</evidence>
<evidence type="ECO:0000269" key="10">
    <source>
    </source>
</evidence>
<evidence type="ECO:0000303" key="11">
    <source>
    </source>
</evidence>
<evidence type="ECO:0000303" key="12">
    <source ref="2"/>
</evidence>
<evidence type="ECO:0000305" key="13"/>
<organism>
    <name type="scientific">Arabidopsis thaliana</name>
    <name type="common">Mouse-ear cress</name>
    <dbReference type="NCBI Taxonomy" id="3702"/>
    <lineage>
        <taxon>Eukaryota</taxon>
        <taxon>Viridiplantae</taxon>
        <taxon>Streptophyta</taxon>
        <taxon>Embryophyta</taxon>
        <taxon>Tracheophyta</taxon>
        <taxon>Spermatophyta</taxon>
        <taxon>Magnoliopsida</taxon>
        <taxon>eudicotyledons</taxon>
        <taxon>Gunneridae</taxon>
        <taxon>Pentapetalae</taxon>
        <taxon>rosids</taxon>
        <taxon>malvids</taxon>
        <taxon>Brassicales</taxon>
        <taxon>Brassicaceae</taxon>
        <taxon>Camelineae</taxon>
        <taxon>Arabidopsis</taxon>
    </lineage>
</organism>
<dbReference type="EC" id="2.7.7.-"/>
<dbReference type="EMBL" id="AB187523">
    <property type="protein sequence ID" value="BAD89586.1"/>
    <property type="molecule type" value="mRNA"/>
</dbReference>
<dbReference type="EMBL" id="EF016093">
    <property type="protein sequence ID" value="ABN48548.1"/>
    <property type="molecule type" value="mRNA"/>
</dbReference>
<dbReference type="EMBL" id="EF016094">
    <property type="protein sequence ID" value="ABN48549.1"/>
    <property type="molecule type" value="mRNA"/>
</dbReference>
<dbReference type="EMBL" id="EF016095">
    <property type="protein sequence ID" value="ABN48550.1"/>
    <property type="molecule type" value="mRNA"/>
</dbReference>
<dbReference type="EMBL" id="EF016096">
    <property type="protein sequence ID" value="ABN48551.1"/>
    <property type="molecule type" value="mRNA"/>
</dbReference>
<dbReference type="EMBL" id="EF016097">
    <property type="protein sequence ID" value="ABN48552.1"/>
    <property type="molecule type" value="mRNA"/>
</dbReference>
<dbReference type="EMBL" id="EF016098">
    <property type="protein sequence ID" value="ABN48553.1"/>
    <property type="molecule type" value="mRNA"/>
</dbReference>
<dbReference type="EMBL" id="AB016874">
    <property type="protein sequence ID" value="BAB08828.1"/>
    <property type="status" value="ALT_SEQ"/>
    <property type="molecule type" value="Genomic_DNA"/>
</dbReference>
<dbReference type="EMBL" id="AC002342">
    <property type="protein sequence ID" value="AAC79145.1"/>
    <property type="status" value="ALT_SEQ"/>
    <property type="molecule type" value="Genomic_DNA"/>
</dbReference>
<dbReference type="EMBL" id="CP002688">
    <property type="protein sequence ID" value="AED95156.1"/>
    <property type="molecule type" value="Genomic_DNA"/>
</dbReference>
<dbReference type="EMBL" id="CP002688">
    <property type="protein sequence ID" value="AED95157.1"/>
    <property type="molecule type" value="Genomic_DNA"/>
</dbReference>
<dbReference type="EMBL" id="AY080825">
    <property type="protein sequence ID" value="AAL87302.1"/>
    <property type="molecule type" value="mRNA"/>
</dbReference>
<dbReference type="RefSeq" id="NP_001119373.1">
    <molecule id="A3EWL3-1"/>
    <property type="nucleotide sequence ID" value="NM_001125901.2"/>
</dbReference>
<dbReference type="RefSeq" id="NP_199288.4">
    <molecule id="A3EWL3-2"/>
    <property type="nucleotide sequence ID" value="NM_123842.5"/>
</dbReference>
<dbReference type="SMR" id="A3EWL3"/>
<dbReference type="FunCoup" id="A3EWL3">
    <property type="interactions" value="3154"/>
</dbReference>
<dbReference type="STRING" id="3702.A3EWL3"/>
<dbReference type="PaxDb" id="3702-AT5G44750.2"/>
<dbReference type="ProteomicsDB" id="236891">
    <molecule id="A3EWL3-1"/>
</dbReference>
<dbReference type="EnsemblPlants" id="AT5G44750.1">
    <molecule id="A3EWL3-2"/>
    <property type="protein sequence ID" value="AT5G44750.1"/>
    <property type="gene ID" value="AT5G44750"/>
</dbReference>
<dbReference type="EnsemblPlants" id="AT5G44750.2">
    <molecule id="A3EWL3-1"/>
    <property type="protein sequence ID" value="AT5G44750.2"/>
    <property type="gene ID" value="AT5G44750"/>
</dbReference>
<dbReference type="GeneID" id="834504"/>
<dbReference type="Gramene" id="AT5G44750.1">
    <molecule id="A3EWL3-2"/>
    <property type="protein sequence ID" value="AT5G44750.1"/>
    <property type="gene ID" value="AT5G44750"/>
</dbReference>
<dbReference type="Gramene" id="AT5G44750.2">
    <molecule id="A3EWL3-1"/>
    <property type="protein sequence ID" value="AT5G44750.2"/>
    <property type="gene ID" value="AT5G44750"/>
</dbReference>
<dbReference type="KEGG" id="ath:AT5G44750"/>
<dbReference type="Araport" id="AT5G44750"/>
<dbReference type="TAIR" id="AT5G44750">
    <property type="gene designation" value="REV1"/>
</dbReference>
<dbReference type="eggNOG" id="KOG2093">
    <property type="taxonomic scope" value="Eukaryota"/>
</dbReference>
<dbReference type="InParanoid" id="A3EWL3"/>
<dbReference type="OMA" id="EELHKCF"/>
<dbReference type="PhylomeDB" id="A3EWL3"/>
<dbReference type="PRO" id="PR:A3EWL3"/>
<dbReference type="Proteomes" id="UP000006548">
    <property type="component" value="Chromosome 5"/>
</dbReference>
<dbReference type="ExpressionAtlas" id="A3EWL3">
    <property type="expression patterns" value="baseline and differential"/>
</dbReference>
<dbReference type="GO" id="GO:0005634">
    <property type="term" value="C:nucleus"/>
    <property type="evidence" value="ECO:0007669"/>
    <property type="project" value="UniProtKB-SubCell"/>
</dbReference>
<dbReference type="GO" id="GO:0003684">
    <property type="term" value="F:damaged DNA binding"/>
    <property type="evidence" value="ECO:0007669"/>
    <property type="project" value="InterPro"/>
</dbReference>
<dbReference type="GO" id="GO:0003887">
    <property type="term" value="F:DNA-directed DNA polymerase activity"/>
    <property type="evidence" value="ECO:0000314"/>
    <property type="project" value="TAIR"/>
</dbReference>
<dbReference type="GO" id="GO:0046872">
    <property type="term" value="F:metal ion binding"/>
    <property type="evidence" value="ECO:0007669"/>
    <property type="project" value="UniProtKB-KW"/>
</dbReference>
<dbReference type="GO" id="GO:0006974">
    <property type="term" value="P:DNA damage response"/>
    <property type="evidence" value="ECO:0000315"/>
    <property type="project" value="TAIR"/>
</dbReference>
<dbReference type="GO" id="GO:0042276">
    <property type="term" value="P:error-prone translesion synthesis"/>
    <property type="evidence" value="ECO:0007669"/>
    <property type="project" value="InterPro"/>
</dbReference>
<dbReference type="GO" id="GO:0010224">
    <property type="term" value="P:response to UV-B"/>
    <property type="evidence" value="ECO:0000315"/>
    <property type="project" value="TAIR"/>
</dbReference>
<dbReference type="CDD" id="cd17719">
    <property type="entry name" value="BRCT_Rev1"/>
    <property type="match status" value="1"/>
</dbReference>
<dbReference type="CDD" id="cd01701">
    <property type="entry name" value="PolY_Rev1"/>
    <property type="match status" value="1"/>
</dbReference>
<dbReference type="FunFam" id="1.10.150.20:FF:000025">
    <property type="entry name" value="DNA repair protein REV1"/>
    <property type="match status" value="1"/>
</dbReference>
<dbReference type="FunFam" id="3.30.1490.100:FF:000001">
    <property type="entry name" value="DNA repair protein REV1"/>
    <property type="match status" value="1"/>
</dbReference>
<dbReference type="FunFam" id="3.30.70.270:FF:000019">
    <property type="entry name" value="DNA repair protein REV1"/>
    <property type="match status" value="1"/>
</dbReference>
<dbReference type="FunFam" id="3.40.1170.60:FF:000004">
    <property type="entry name" value="DNA repair protein REV1"/>
    <property type="match status" value="1"/>
</dbReference>
<dbReference type="FunFam" id="3.40.50.10190:FF:000011">
    <property type="entry name" value="DNA repair protein REV1"/>
    <property type="match status" value="1"/>
</dbReference>
<dbReference type="Gene3D" id="3.30.70.270">
    <property type="match status" value="1"/>
</dbReference>
<dbReference type="Gene3D" id="3.40.1170.60">
    <property type="match status" value="1"/>
</dbReference>
<dbReference type="Gene3D" id="6.10.250.1490">
    <property type="match status" value="1"/>
</dbReference>
<dbReference type="Gene3D" id="1.10.150.20">
    <property type="entry name" value="5' to 3' exonuclease, C-terminal subdomain"/>
    <property type="match status" value="1"/>
</dbReference>
<dbReference type="Gene3D" id="3.40.50.10190">
    <property type="entry name" value="BRCT domain"/>
    <property type="match status" value="1"/>
</dbReference>
<dbReference type="Gene3D" id="3.30.1490.100">
    <property type="entry name" value="DNA polymerase, Y-family, little finger domain"/>
    <property type="match status" value="1"/>
</dbReference>
<dbReference type="InterPro" id="IPR001357">
    <property type="entry name" value="BRCT_dom"/>
</dbReference>
<dbReference type="InterPro" id="IPR036420">
    <property type="entry name" value="BRCT_dom_sf"/>
</dbReference>
<dbReference type="InterPro" id="IPR043502">
    <property type="entry name" value="DNA/RNA_pol_sf"/>
</dbReference>
<dbReference type="InterPro" id="IPR036775">
    <property type="entry name" value="DNA_pol_Y-fam_lit_finger_sf"/>
</dbReference>
<dbReference type="InterPro" id="IPR017961">
    <property type="entry name" value="DNA_pol_Y-fam_little_finger"/>
</dbReference>
<dbReference type="InterPro" id="IPR053848">
    <property type="entry name" value="IMS_HHH_1"/>
</dbReference>
<dbReference type="InterPro" id="IPR012112">
    <property type="entry name" value="REV1"/>
</dbReference>
<dbReference type="InterPro" id="IPR043128">
    <property type="entry name" value="Rev_trsase/Diguanyl_cyclase"/>
</dbReference>
<dbReference type="InterPro" id="IPR001126">
    <property type="entry name" value="UmuC"/>
</dbReference>
<dbReference type="PANTHER" id="PTHR45990">
    <property type="entry name" value="DNA REPAIR PROTEIN REV1"/>
    <property type="match status" value="1"/>
</dbReference>
<dbReference type="PANTHER" id="PTHR45990:SF1">
    <property type="entry name" value="DNA REPAIR PROTEIN REV1"/>
    <property type="match status" value="1"/>
</dbReference>
<dbReference type="Pfam" id="PF00533">
    <property type="entry name" value="BRCT"/>
    <property type="match status" value="1"/>
</dbReference>
<dbReference type="Pfam" id="PF00817">
    <property type="entry name" value="IMS"/>
    <property type="match status" value="1"/>
</dbReference>
<dbReference type="Pfam" id="PF11799">
    <property type="entry name" value="IMS_C"/>
    <property type="match status" value="1"/>
</dbReference>
<dbReference type="Pfam" id="PF21999">
    <property type="entry name" value="IMS_HHH_1"/>
    <property type="match status" value="1"/>
</dbReference>
<dbReference type="PIRSF" id="PIRSF036573">
    <property type="entry name" value="REV1"/>
    <property type="match status" value="1"/>
</dbReference>
<dbReference type="SMART" id="SM00292">
    <property type="entry name" value="BRCT"/>
    <property type="match status" value="1"/>
</dbReference>
<dbReference type="SUPFAM" id="SSF52113">
    <property type="entry name" value="BRCT domain"/>
    <property type="match status" value="1"/>
</dbReference>
<dbReference type="SUPFAM" id="SSF56672">
    <property type="entry name" value="DNA/RNA polymerases"/>
    <property type="match status" value="1"/>
</dbReference>
<dbReference type="SUPFAM" id="SSF100879">
    <property type="entry name" value="Lesion bypass DNA polymerase (Y-family), little finger domain"/>
    <property type="match status" value="1"/>
</dbReference>
<dbReference type="PROSITE" id="PS50172">
    <property type="entry name" value="BRCT"/>
    <property type="match status" value="1"/>
</dbReference>
<dbReference type="PROSITE" id="PS50173">
    <property type="entry name" value="UMUC"/>
    <property type="match status" value="1"/>
</dbReference>
<sequence>MKRSLGSNSSNNSGSGSNKKSKKNNNPSNQKTLGAAWGAASSRSSFRSSPFSDFGSYMEVKNRKLQNQFETEASAASRGVSGSEKLIFQGVSIFVDGFTIPSHQELKGYMMKYGGRFENYFSRRSVTHIICSNLPDSKVKNLRTFSRGLPVVKPTWIVDSISANRLLGWVPYQLDQLNDTQPKLSAFFAPRSHLTPQMASPVTSFQPDTGYSEAEEGSSIRADDSEEARDHIDDEIDGVYIENTTPELTEQTGTGDLKSSEMNAEGLGNYDIEEKEVSSELQSTTNLHSTSDNKSVHANGKNGGKSIATAAGSSTRRHSTLEDPNFVENYFKNSRLHFIGTWRNRYRKRFHGSSNGLKWADSGQNTAEMAKKSTIIHIDLDCFFVSVVIKNRLELHDKPVAVCHSDNPKGTAEISSANYPARAYGVKAGMFVRHAKDLCPQLVIVPYNFEAYEEVADQFYDILHRHCRKVQALSCDEAFLDVSDLSDVETEVLASTIRNEILETTGCSASAGIGGTMLMARLATRVAKPAGQLYISAEKVEEFLDQLPVGTLPGVGSVLKEKLVKQNIQTCGQLRLISKDSLQKDFGVKTGEMLWSYSRGLDLRSVTAVQESKSIGAEVNWGVRFRDQQDVFILVQHFLQCLCKEVSLRLQGCEMIGRTFTLKIKKRKKDAEEPTKYMGCGDCDNLSRSITVPAATDDIEVLQRISKKLFGSFCLDVKEVRGVGLQVSKLDSADPSNKGSRTLKSWLSSAPAVVQIEQDDNVFAAKVRENSDCNRPVTGGVSRLRESNSEESSIQSGDTNSSLPPMCYLDMEVLENLPPELLSELDGTYGGKLFELIEKKRGKRRINCNSPHVSLDGTAASIKELKSLSVKIHGLSTSGEKEYKEPYVPHPSIARTSNQHTIEMTDLLPSSLSQVDVSVLQELPEELRADVLGAFPSHRRQQSSSDVPKETCKKQDEEPIDLKGTENEIGLSFSSLWFGNPPLWTEKFKVSGNCTMEKLSAIYFKVAQSRPMLSLVLQHAISEMSSFPDAASASDLDKAIYDVCELLKQYINLKVGGDIEEIYLCFRLLKRLAARSQLFLQVYEILSPFIQASISEHYGGSLSIP</sequence>